<dbReference type="EC" id="2.7.8.13" evidence="1"/>
<dbReference type="EMBL" id="AJ293314">
    <property type="protein sequence ID" value="CAC33669.1"/>
    <property type="molecule type" value="Genomic_DNA"/>
</dbReference>
<dbReference type="RefSeq" id="WP_012151071.1">
    <property type="nucleotide sequence ID" value="NZ_CP114277.2"/>
</dbReference>
<dbReference type="SMR" id="Q9AKI9"/>
<dbReference type="GeneID" id="79937589"/>
<dbReference type="OMA" id="DTPTMGG"/>
<dbReference type="UniPathway" id="UPA00219"/>
<dbReference type="GO" id="GO:0005886">
    <property type="term" value="C:plasma membrane"/>
    <property type="evidence" value="ECO:0007669"/>
    <property type="project" value="UniProtKB-SubCell"/>
</dbReference>
<dbReference type="GO" id="GO:0046872">
    <property type="term" value="F:metal ion binding"/>
    <property type="evidence" value="ECO:0007669"/>
    <property type="project" value="UniProtKB-KW"/>
</dbReference>
<dbReference type="GO" id="GO:0008963">
    <property type="term" value="F:phospho-N-acetylmuramoyl-pentapeptide-transferase activity"/>
    <property type="evidence" value="ECO:0007669"/>
    <property type="project" value="UniProtKB-UniRule"/>
</dbReference>
<dbReference type="GO" id="GO:0051992">
    <property type="term" value="F:UDP-N-acetylmuramoyl-L-alanyl-D-glutamyl-meso-2,6-diaminopimelyl-D-alanyl-D-alanine:undecaprenyl-phosphate transferase activity"/>
    <property type="evidence" value="ECO:0007669"/>
    <property type="project" value="RHEA"/>
</dbReference>
<dbReference type="GO" id="GO:0051301">
    <property type="term" value="P:cell division"/>
    <property type="evidence" value="ECO:0007669"/>
    <property type="project" value="UniProtKB-KW"/>
</dbReference>
<dbReference type="GO" id="GO:0071555">
    <property type="term" value="P:cell wall organization"/>
    <property type="evidence" value="ECO:0007669"/>
    <property type="project" value="UniProtKB-KW"/>
</dbReference>
<dbReference type="GO" id="GO:0009252">
    <property type="term" value="P:peptidoglycan biosynthetic process"/>
    <property type="evidence" value="ECO:0007669"/>
    <property type="project" value="UniProtKB-UniRule"/>
</dbReference>
<dbReference type="GO" id="GO:0008360">
    <property type="term" value="P:regulation of cell shape"/>
    <property type="evidence" value="ECO:0007669"/>
    <property type="project" value="UniProtKB-KW"/>
</dbReference>
<dbReference type="CDD" id="cd06852">
    <property type="entry name" value="GT_MraY"/>
    <property type="match status" value="1"/>
</dbReference>
<dbReference type="HAMAP" id="MF_00038">
    <property type="entry name" value="MraY"/>
    <property type="match status" value="1"/>
</dbReference>
<dbReference type="InterPro" id="IPR000715">
    <property type="entry name" value="Glycosyl_transferase_4"/>
</dbReference>
<dbReference type="InterPro" id="IPR003524">
    <property type="entry name" value="PNAcMuramoyl-5peptid_Trfase"/>
</dbReference>
<dbReference type="InterPro" id="IPR018480">
    <property type="entry name" value="PNAcMuramoyl-5peptid_Trfase_CS"/>
</dbReference>
<dbReference type="NCBIfam" id="TIGR00445">
    <property type="entry name" value="mraY"/>
    <property type="match status" value="1"/>
</dbReference>
<dbReference type="PANTHER" id="PTHR22926">
    <property type="entry name" value="PHOSPHO-N-ACETYLMURAMOYL-PENTAPEPTIDE-TRANSFERASE"/>
    <property type="match status" value="1"/>
</dbReference>
<dbReference type="PANTHER" id="PTHR22926:SF5">
    <property type="entry name" value="PHOSPHO-N-ACETYLMURAMOYL-PENTAPEPTIDE-TRANSFERASE HOMOLOG"/>
    <property type="match status" value="1"/>
</dbReference>
<dbReference type="Pfam" id="PF00953">
    <property type="entry name" value="Glycos_transf_4"/>
    <property type="match status" value="1"/>
</dbReference>
<dbReference type="PROSITE" id="PS01347">
    <property type="entry name" value="MRAY_1"/>
    <property type="match status" value="1"/>
</dbReference>
<dbReference type="PROSITE" id="PS01348">
    <property type="entry name" value="MRAY_2"/>
    <property type="match status" value="1"/>
</dbReference>
<feature type="chain" id="PRO_0000108881" description="Phospho-N-acetylmuramoyl-pentapeptide-transferase">
    <location>
        <begin position="1"/>
        <end position="361"/>
    </location>
</feature>
<feature type="transmembrane region" description="Helical" evidence="1">
    <location>
        <begin position="28"/>
        <end position="48"/>
    </location>
</feature>
<feature type="transmembrane region" description="Helical" evidence="1">
    <location>
        <begin position="74"/>
        <end position="94"/>
    </location>
</feature>
<feature type="transmembrane region" description="Helical" evidence="1">
    <location>
        <begin position="99"/>
        <end position="119"/>
    </location>
</feature>
<feature type="transmembrane region" description="Helical" evidence="1">
    <location>
        <begin position="133"/>
        <end position="153"/>
    </location>
</feature>
<feature type="transmembrane region" description="Helical" evidence="1">
    <location>
        <begin position="168"/>
        <end position="188"/>
    </location>
</feature>
<feature type="transmembrane region" description="Helical" evidence="1">
    <location>
        <begin position="203"/>
        <end position="223"/>
    </location>
</feature>
<feature type="transmembrane region" description="Helical" evidence="1">
    <location>
        <begin position="236"/>
        <end position="256"/>
    </location>
</feature>
<feature type="transmembrane region" description="Helical" evidence="1">
    <location>
        <begin position="263"/>
        <end position="283"/>
    </location>
</feature>
<feature type="transmembrane region" description="Helical" evidence="1">
    <location>
        <begin position="288"/>
        <end position="308"/>
    </location>
</feature>
<feature type="transmembrane region" description="Helical" evidence="1">
    <location>
        <begin position="338"/>
        <end position="358"/>
    </location>
</feature>
<name>MRAY_RICRI</name>
<organism>
    <name type="scientific">Rickettsia rickettsii</name>
    <dbReference type="NCBI Taxonomy" id="783"/>
    <lineage>
        <taxon>Bacteria</taxon>
        <taxon>Pseudomonadati</taxon>
        <taxon>Pseudomonadota</taxon>
        <taxon>Alphaproteobacteria</taxon>
        <taxon>Rickettsiales</taxon>
        <taxon>Rickettsiaceae</taxon>
        <taxon>Rickettsieae</taxon>
        <taxon>Rickettsia</taxon>
        <taxon>spotted fever group</taxon>
    </lineage>
</organism>
<comment type="function">
    <text evidence="1">Catalyzes the initial step of the lipid cycle reactions in the biosynthesis of the cell wall peptidoglycan: transfers peptidoglycan precursor phospho-MurNAc-pentapeptide from UDP-MurNAc-pentapeptide onto the lipid carrier undecaprenyl phosphate, yielding undecaprenyl-pyrophosphoryl-MurNAc-pentapeptide, known as lipid I.</text>
</comment>
<comment type="catalytic activity">
    <reaction evidence="1">
        <text>UDP-N-acetyl-alpha-D-muramoyl-L-alanyl-gamma-D-glutamyl-meso-2,6-diaminopimeloyl-D-alanyl-D-alanine + di-trans,octa-cis-undecaprenyl phosphate = di-trans,octa-cis-undecaprenyl diphospho-N-acetyl-alpha-D-muramoyl-L-alanyl-D-glutamyl-meso-2,6-diaminopimeloyl-D-alanyl-D-alanine + UMP</text>
        <dbReference type="Rhea" id="RHEA:28386"/>
        <dbReference type="ChEBI" id="CHEBI:57865"/>
        <dbReference type="ChEBI" id="CHEBI:60392"/>
        <dbReference type="ChEBI" id="CHEBI:61386"/>
        <dbReference type="ChEBI" id="CHEBI:61387"/>
        <dbReference type="EC" id="2.7.8.13"/>
    </reaction>
</comment>
<comment type="cofactor">
    <cofactor evidence="1">
        <name>Mg(2+)</name>
        <dbReference type="ChEBI" id="CHEBI:18420"/>
    </cofactor>
</comment>
<comment type="pathway">
    <text evidence="1">Cell wall biogenesis; peptidoglycan biosynthesis.</text>
</comment>
<comment type="subcellular location">
    <subcellularLocation>
        <location evidence="1">Cell membrane</location>
        <topology evidence="1">Multi-pass membrane protein</topology>
    </subcellularLocation>
</comment>
<comment type="similarity">
    <text evidence="1 2">Belongs to the glycosyltransferase 4 family. MraY subfamily.</text>
</comment>
<evidence type="ECO:0000255" key="1">
    <source>
        <dbReference type="HAMAP-Rule" id="MF_00038"/>
    </source>
</evidence>
<evidence type="ECO:0000305" key="2"/>
<gene>
    <name evidence="1" type="primary">mraY</name>
</gene>
<sequence length="361" mass="39624">MLYNLLLPHIHNSHIANLFHYITFRSGLAIIITLSLSFITGPILIEFLRSIQKNGQPIRSDGPESHQTKVGTPTMGGIMIILSSCLSTLLLADLTNKYIWITLFGFISFGIIGFMDDYAKVTKNNHYGVRGKSKLLLQGIISVIICVLLEYLDKSPSHLLNVPFFKNLSLDLGYCYIVFAIFVIVGSSNAVNLTDGLDGLATVPIAFTAGSFALISYLVGNLIYSNYLQLTYIPNTGELTVLCAGLVGSCLGFLWFNAQPAEVFMGDTGSLSLGGVLGIISVITKHEIVLAIVGGLFVIETASVILQVYYFKATKGKRIFKMAPLHHHFEKHGWAESKVVIRFWIISVIFALIGLSSLKLR</sequence>
<proteinExistence type="inferred from homology"/>
<keyword id="KW-0131">Cell cycle</keyword>
<keyword id="KW-0132">Cell division</keyword>
<keyword id="KW-1003">Cell membrane</keyword>
<keyword id="KW-0133">Cell shape</keyword>
<keyword id="KW-0961">Cell wall biogenesis/degradation</keyword>
<keyword id="KW-0460">Magnesium</keyword>
<keyword id="KW-0472">Membrane</keyword>
<keyword id="KW-0479">Metal-binding</keyword>
<keyword id="KW-0573">Peptidoglycan synthesis</keyword>
<keyword id="KW-0808">Transferase</keyword>
<keyword id="KW-0812">Transmembrane</keyword>
<keyword id="KW-1133">Transmembrane helix</keyword>
<protein>
    <recommendedName>
        <fullName evidence="1">Phospho-N-acetylmuramoyl-pentapeptide-transferase</fullName>
        <ecNumber evidence="1">2.7.8.13</ecNumber>
    </recommendedName>
    <alternativeName>
        <fullName evidence="1">UDP-MurNAc-pentapeptide phosphotransferase</fullName>
    </alternativeName>
</protein>
<reference key="1">
    <citation type="journal article" date="2001" name="Mol. Biol. Evol.">
        <title>Pseudogenes, junk DNA, and the dynamics of Rickettsia genomes.</title>
        <authorList>
            <person name="Andersson J.O."/>
            <person name="Andersson S.G.E."/>
        </authorList>
    </citation>
    <scope>NUCLEOTIDE SEQUENCE [GENOMIC DNA]</scope>
    <source>
        <strain>84-21C</strain>
    </source>
</reference>
<accession>Q9AKI9</accession>